<accession>B0U3D9</accession>
<proteinExistence type="inferred from homology"/>
<feature type="chain" id="PRO_1000121370" description="GTPase Era">
    <location>
        <begin position="1"/>
        <end position="298"/>
    </location>
</feature>
<feature type="domain" description="Era-type G" evidence="2">
    <location>
        <begin position="8"/>
        <end position="176"/>
    </location>
</feature>
<feature type="domain" description="KH type-2" evidence="1">
    <location>
        <begin position="199"/>
        <end position="283"/>
    </location>
</feature>
<feature type="region of interest" description="G1" evidence="2">
    <location>
        <begin position="16"/>
        <end position="23"/>
    </location>
</feature>
<feature type="region of interest" description="G2" evidence="2">
    <location>
        <begin position="42"/>
        <end position="46"/>
    </location>
</feature>
<feature type="region of interest" description="G3" evidence="2">
    <location>
        <begin position="63"/>
        <end position="66"/>
    </location>
</feature>
<feature type="region of interest" description="G4" evidence="2">
    <location>
        <begin position="125"/>
        <end position="128"/>
    </location>
</feature>
<feature type="region of interest" description="G5" evidence="2">
    <location>
        <begin position="155"/>
        <end position="157"/>
    </location>
</feature>
<feature type="binding site" evidence="1">
    <location>
        <begin position="16"/>
        <end position="23"/>
    </location>
    <ligand>
        <name>GTP</name>
        <dbReference type="ChEBI" id="CHEBI:37565"/>
    </ligand>
</feature>
<feature type="binding site" evidence="1">
    <location>
        <begin position="63"/>
        <end position="67"/>
    </location>
    <ligand>
        <name>GTP</name>
        <dbReference type="ChEBI" id="CHEBI:37565"/>
    </ligand>
</feature>
<feature type="binding site" evidence="1">
    <location>
        <begin position="125"/>
        <end position="128"/>
    </location>
    <ligand>
        <name>GTP</name>
        <dbReference type="ChEBI" id="CHEBI:37565"/>
    </ligand>
</feature>
<evidence type="ECO:0000255" key="1">
    <source>
        <dbReference type="HAMAP-Rule" id="MF_00367"/>
    </source>
</evidence>
<evidence type="ECO:0000255" key="2">
    <source>
        <dbReference type="PROSITE-ProRule" id="PRU01050"/>
    </source>
</evidence>
<dbReference type="EMBL" id="CP000941">
    <property type="protein sequence ID" value="ACA12368.1"/>
    <property type="molecule type" value="Genomic_DNA"/>
</dbReference>
<dbReference type="RefSeq" id="WP_004083432.1">
    <property type="nucleotide sequence ID" value="NC_010513.1"/>
</dbReference>
<dbReference type="SMR" id="B0U3D9"/>
<dbReference type="KEGG" id="xfm:Xfasm12_1445"/>
<dbReference type="HOGENOM" id="CLU_038009_1_2_6"/>
<dbReference type="GO" id="GO:0005829">
    <property type="term" value="C:cytosol"/>
    <property type="evidence" value="ECO:0007669"/>
    <property type="project" value="TreeGrafter"/>
</dbReference>
<dbReference type="GO" id="GO:0005886">
    <property type="term" value="C:plasma membrane"/>
    <property type="evidence" value="ECO:0007669"/>
    <property type="project" value="UniProtKB-SubCell"/>
</dbReference>
<dbReference type="GO" id="GO:0005525">
    <property type="term" value="F:GTP binding"/>
    <property type="evidence" value="ECO:0007669"/>
    <property type="project" value="UniProtKB-UniRule"/>
</dbReference>
<dbReference type="GO" id="GO:0003924">
    <property type="term" value="F:GTPase activity"/>
    <property type="evidence" value="ECO:0007669"/>
    <property type="project" value="UniProtKB-UniRule"/>
</dbReference>
<dbReference type="GO" id="GO:0043024">
    <property type="term" value="F:ribosomal small subunit binding"/>
    <property type="evidence" value="ECO:0007669"/>
    <property type="project" value="TreeGrafter"/>
</dbReference>
<dbReference type="GO" id="GO:0070181">
    <property type="term" value="F:small ribosomal subunit rRNA binding"/>
    <property type="evidence" value="ECO:0007669"/>
    <property type="project" value="UniProtKB-UniRule"/>
</dbReference>
<dbReference type="GO" id="GO:0000028">
    <property type="term" value="P:ribosomal small subunit assembly"/>
    <property type="evidence" value="ECO:0007669"/>
    <property type="project" value="TreeGrafter"/>
</dbReference>
<dbReference type="CDD" id="cd04163">
    <property type="entry name" value="Era"/>
    <property type="match status" value="1"/>
</dbReference>
<dbReference type="CDD" id="cd22534">
    <property type="entry name" value="KH-II_Era"/>
    <property type="match status" value="1"/>
</dbReference>
<dbReference type="FunFam" id="3.30.300.20:FF:000003">
    <property type="entry name" value="GTPase Era"/>
    <property type="match status" value="1"/>
</dbReference>
<dbReference type="Gene3D" id="3.30.300.20">
    <property type="match status" value="1"/>
</dbReference>
<dbReference type="Gene3D" id="3.40.50.300">
    <property type="entry name" value="P-loop containing nucleotide triphosphate hydrolases"/>
    <property type="match status" value="1"/>
</dbReference>
<dbReference type="HAMAP" id="MF_00367">
    <property type="entry name" value="GTPase_Era"/>
    <property type="match status" value="1"/>
</dbReference>
<dbReference type="InterPro" id="IPR030388">
    <property type="entry name" value="G_ERA_dom"/>
</dbReference>
<dbReference type="InterPro" id="IPR006073">
    <property type="entry name" value="GTP-bd"/>
</dbReference>
<dbReference type="InterPro" id="IPR005662">
    <property type="entry name" value="GTPase_Era-like"/>
</dbReference>
<dbReference type="InterPro" id="IPR015946">
    <property type="entry name" value="KH_dom-like_a/b"/>
</dbReference>
<dbReference type="InterPro" id="IPR004044">
    <property type="entry name" value="KH_dom_type_2"/>
</dbReference>
<dbReference type="InterPro" id="IPR009019">
    <property type="entry name" value="KH_sf_prok-type"/>
</dbReference>
<dbReference type="InterPro" id="IPR027417">
    <property type="entry name" value="P-loop_NTPase"/>
</dbReference>
<dbReference type="InterPro" id="IPR005225">
    <property type="entry name" value="Small_GTP-bd"/>
</dbReference>
<dbReference type="NCBIfam" id="TIGR00436">
    <property type="entry name" value="era"/>
    <property type="match status" value="1"/>
</dbReference>
<dbReference type="NCBIfam" id="NF000908">
    <property type="entry name" value="PRK00089.1"/>
    <property type="match status" value="1"/>
</dbReference>
<dbReference type="NCBIfam" id="TIGR00231">
    <property type="entry name" value="small_GTP"/>
    <property type="match status" value="1"/>
</dbReference>
<dbReference type="PANTHER" id="PTHR42698">
    <property type="entry name" value="GTPASE ERA"/>
    <property type="match status" value="1"/>
</dbReference>
<dbReference type="PANTHER" id="PTHR42698:SF1">
    <property type="entry name" value="GTPASE ERA, MITOCHONDRIAL"/>
    <property type="match status" value="1"/>
</dbReference>
<dbReference type="Pfam" id="PF07650">
    <property type="entry name" value="KH_2"/>
    <property type="match status" value="1"/>
</dbReference>
<dbReference type="Pfam" id="PF01926">
    <property type="entry name" value="MMR_HSR1"/>
    <property type="match status" value="1"/>
</dbReference>
<dbReference type="PRINTS" id="PR00326">
    <property type="entry name" value="GTP1OBG"/>
</dbReference>
<dbReference type="SUPFAM" id="SSF52540">
    <property type="entry name" value="P-loop containing nucleoside triphosphate hydrolases"/>
    <property type="match status" value="1"/>
</dbReference>
<dbReference type="SUPFAM" id="SSF54814">
    <property type="entry name" value="Prokaryotic type KH domain (KH-domain type II)"/>
    <property type="match status" value="1"/>
</dbReference>
<dbReference type="PROSITE" id="PS51713">
    <property type="entry name" value="G_ERA"/>
    <property type="match status" value="1"/>
</dbReference>
<dbReference type="PROSITE" id="PS50823">
    <property type="entry name" value="KH_TYPE_2"/>
    <property type="match status" value="1"/>
</dbReference>
<keyword id="KW-0997">Cell inner membrane</keyword>
<keyword id="KW-1003">Cell membrane</keyword>
<keyword id="KW-0963">Cytoplasm</keyword>
<keyword id="KW-0342">GTP-binding</keyword>
<keyword id="KW-0472">Membrane</keyword>
<keyword id="KW-0547">Nucleotide-binding</keyword>
<keyword id="KW-0690">Ribosome biogenesis</keyword>
<keyword id="KW-0694">RNA-binding</keyword>
<keyword id="KW-0699">rRNA-binding</keyword>
<reference key="1">
    <citation type="journal article" date="2010" name="J. Bacteriol.">
        <title>Whole genome sequences of two Xylella fastidiosa strains (M12 and M23) causing almond leaf scorch disease in California.</title>
        <authorList>
            <person name="Chen J."/>
            <person name="Xie G."/>
            <person name="Han S."/>
            <person name="Chertkov O."/>
            <person name="Sims D."/>
            <person name="Civerolo E.L."/>
        </authorList>
    </citation>
    <scope>NUCLEOTIDE SEQUENCE [LARGE SCALE GENOMIC DNA]</scope>
    <source>
        <strain>M12</strain>
    </source>
</reference>
<protein>
    <recommendedName>
        <fullName evidence="1">GTPase Era</fullName>
    </recommendedName>
</protein>
<comment type="function">
    <text evidence="1">An essential GTPase that binds both GDP and GTP, with rapid nucleotide exchange. Plays a role in 16S rRNA processing and 30S ribosomal subunit biogenesis and possibly also in cell cycle regulation and energy metabolism.</text>
</comment>
<comment type="subunit">
    <text evidence="1">Monomer.</text>
</comment>
<comment type="subcellular location">
    <subcellularLocation>
        <location>Cytoplasm</location>
    </subcellularLocation>
    <subcellularLocation>
        <location evidence="1">Cell inner membrane</location>
        <topology evidence="1">Peripheral membrane protein</topology>
    </subcellularLocation>
</comment>
<comment type="similarity">
    <text evidence="1 2">Belongs to the TRAFAC class TrmE-Era-EngA-EngB-Septin-like GTPase superfamily. Era GTPase family.</text>
</comment>
<gene>
    <name evidence="1" type="primary">era</name>
    <name type="ordered locus">Xfasm12_1445</name>
</gene>
<sequence length="298" mass="33670">MTQTVPYRCGRIAVIGRPNVGKSTLTNALVGTKISIVSNRPQTTRHRLLGIATFPEGQIVLVDTPGLHREQKHPMNRLMNRTARGSLEDVDAALLVTESTHWNEEDTLAYNLLNDTGIPVVLVINKIDRFKDKSALLPLLTHINENHTFATIHPVSALKRKGLETLVSDLLALLPEGDPMFSEDEITDRSQRFLASELVREQVMRQLGEELPYATTVEIEYFTENTGLFRIGALIWVERESQKAIVIGKGGARLKEIGVKARQQMERLFQTKVFLETWVRVRKDWSNNEAALKTFGYE</sequence>
<organism>
    <name type="scientific">Xylella fastidiosa (strain M12)</name>
    <dbReference type="NCBI Taxonomy" id="405440"/>
    <lineage>
        <taxon>Bacteria</taxon>
        <taxon>Pseudomonadati</taxon>
        <taxon>Pseudomonadota</taxon>
        <taxon>Gammaproteobacteria</taxon>
        <taxon>Lysobacterales</taxon>
        <taxon>Lysobacteraceae</taxon>
        <taxon>Xylella</taxon>
    </lineage>
</organism>
<name>ERA_XYLFM</name>